<name>NMUR1_HUMAN</name>
<dbReference type="EMBL" id="AF272362">
    <property type="protein sequence ID" value="AAG24793.1"/>
    <property type="molecule type" value="mRNA"/>
</dbReference>
<dbReference type="EMBL" id="AC017104">
    <property type="protein sequence ID" value="AAY24249.1"/>
    <property type="molecule type" value="Genomic_DNA"/>
</dbReference>
<dbReference type="EMBL" id="BC036543">
    <property type="protein sequence ID" value="AAH36543.1"/>
    <property type="molecule type" value="mRNA"/>
</dbReference>
<dbReference type="EMBL" id="BC051914">
    <property type="protein sequence ID" value="AAH51914.1"/>
    <property type="molecule type" value="mRNA"/>
</dbReference>
<dbReference type="EMBL" id="AF044601">
    <property type="protein sequence ID" value="AAC02680.1"/>
    <property type="molecule type" value="Genomic_DNA"/>
</dbReference>
<dbReference type="EMBL" id="AF044600">
    <property type="protein sequence ID" value="AAC02680.1"/>
    <property type="status" value="JOINED"/>
    <property type="molecule type" value="Genomic_DNA"/>
</dbReference>
<dbReference type="CCDS" id="CCDS2486.1"/>
<dbReference type="RefSeq" id="NP_006047.3">
    <property type="nucleotide sequence ID" value="NM_006056.4"/>
</dbReference>
<dbReference type="RefSeq" id="XP_011508789.1">
    <property type="nucleotide sequence ID" value="XM_011510487.2"/>
</dbReference>
<dbReference type="PDB" id="7W53">
    <property type="method" value="EM"/>
    <property type="resolution" value="3.20 A"/>
    <property type="chains" value="R=1-426"/>
</dbReference>
<dbReference type="PDB" id="7W56">
    <property type="method" value="EM"/>
    <property type="resolution" value="2.90 A"/>
    <property type="chains" value="R=1-426"/>
</dbReference>
<dbReference type="PDBsum" id="7W53"/>
<dbReference type="PDBsum" id="7W56"/>
<dbReference type="EMDB" id="EMD-32313"/>
<dbReference type="EMDB" id="EMD-32315"/>
<dbReference type="SMR" id="Q9HB89"/>
<dbReference type="BioGRID" id="115600">
    <property type="interactions" value="407"/>
</dbReference>
<dbReference type="FunCoup" id="Q9HB89">
    <property type="interactions" value="1102"/>
</dbReference>
<dbReference type="STRING" id="9606.ENSP00000305877"/>
<dbReference type="BindingDB" id="Q9HB89"/>
<dbReference type="ChEMBL" id="CHEMBL1075178"/>
<dbReference type="GuidetoPHARMACOLOGY" id="298"/>
<dbReference type="TCDB" id="9.A.14.1.13">
    <property type="family name" value="the g-protein-coupled receptor (gpcr) family"/>
</dbReference>
<dbReference type="GlyCosmos" id="Q9HB89">
    <property type="glycosylation" value="3 sites, No reported glycans"/>
</dbReference>
<dbReference type="GlyGen" id="Q9HB89">
    <property type="glycosylation" value="3 sites, 1 N-linked glycan (1 site)"/>
</dbReference>
<dbReference type="iPTMnet" id="Q9HB89"/>
<dbReference type="PhosphoSitePlus" id="Q9HB89"/>
<dbReference type="BioMuta" id="NMUR1"/>
<dbReference type="DMDM" id="74761608"/>
<dbReference type="PaxDb" id="9606-ENSP00000305877"/>
<dbReference type="PeptideAtlas" id="Q9HB89"/>
<dbReference type="Antibodypedia" id="20210">
    <property type="antibodies" value="226 antibodies from 29 providers"/>
</dbReference>
<dbReference type="DNASU" id="10316"/>
<dbReference type="Ensembl" id="ENST00000305141.5">
    <property type="protein sequence ID" value="ENSP00000305877.4"/>
    <property type="gene ID" value="ENSG00000171596.7"/>
</dbReference>
<dbReference type="GeneID" id="10316"/>
<dbReference type="KEGG" id="hsa:10316"/>
<dbReference type="MANE-Select" id="ENST00000305141.5">
    <property type="protein sequence ID" value="ENSP00000305877.4"/>
    <property type="RefSeq nucleotide sequence ID" value="NM_006056.5"/>
    <property type="RefSeq protein sequence ID" value="NP_006047.3"/>
</dbReference>
<dbReference type="UCSC" id="uc002vry.5">
    <property type="organism name" value="human"/>
</dbReference>
<dbReference type="AGR" id="HGNC:4518"/>
<dbReference type="CTD" id="10316"/>
<dbReference type="DisGeNET" id="10316"/>
<dbReference type="GeneCards" id="NMUR1"/>
<dbReference type="HGNC" id="HGNC:4518">
    <property type="gene designation" value="NMUR1"/>
</dbReference>
<dbReference type="HPA" id="ENSG00000171596">
    <property type="expression patterns" value="Tissue enhanced (retina)"/>
</dbReference>
<dbReference type="MIM" id="604153">
    <property type="type" value="gene"/>
</dbReference>
<dbReference type="neXtProt" id="NX_Q9HB89"/>
<dbReference type="OpenTargets" id="ENSG00000171596"/>
<dbReference type="PharmGKB" id="PA28910"/>
<dbReference type="VEuPathDB" id="HostDB:ENSG00000171596"/>
<dbReference type="eggNOG" id="KOG3656">
    <property type="taxonomic scope" value="Eukaryota"/>
</dbReference>
<dbReference type="GeneTree" id="ENSGT01120000271823"/>
<dbReference type="HOGENOM" id="CLU_009579_6_5_1"/>
<dbReference type="InParanoid" id="Q9HB89"/>
<dbReference type="OMA" id="QLHVPCR"/>
<dbReference type="OrthoDB" id="5962705at2759"/>
<dbReference type="PAN-GO" id="Q9HB89">
    <property type="GO annotations" value="3 GO annotations based on evolutionary models"/>
</dbReference>
<dbReference type="PhylomeDB" id="Q9HB89"/>
<dbReference type="TreeFam" id="TF318522"/>
<dbReference type="PathwayCommons" id="Q9HB89"/>
<dbReference type="Reactome" id="R-HSA-375276">
    <property type="pathway name" value="Peptide ligand-binding receptors"/>
</dbReference>
<dbReference type="Reactome" id="R-HSA-416476">
    <property type="pathway name" value="G alpha (q) signalling events"/>
</dbReference>
<dbReference type="Reactome" id="R-HSA-418594">
    <property type="pathway name" value="G alpha (i) signalling events"/>
</dbReference>
<dbReference type="SignaLink" id="Q9HB89"/>
<dbReference type="SIGNOR" id="Q9HB89"/>
<dbReference type="BioGRID-ORCS" id="10316">
    <property type="hits" value="14 hits in 1147 CRISPR screens"/>
</dbReference>
<dbReference type="ChiTaRS" id="NMUR1">
    <property type="organism name" value="human"/>
</dbReference>
<dbReference type="GeneWiki" id="Neuromedin_U_receptor_1"/>
<dbReference type="GenomeRNAi" id="10316"/>
<dbReference type="Pharos" id="Q9HB89">
    <property type="development level" value="Tchem"/>
</dbReference>
<dbReference type="PRO" id="PR:Q9HB89"/>
<dbReference type="Proteomes" id="UP000005640">
    <property type="component" value="Chromosome 2"/>
</dbReference>
<dbReference type="RNAct" id="Q9HB89">
    <property type="molecule type" value="protein"/>
</dbReference>
<dbReference type="Bgee" id="ENSG00000171596">
    <property type="expression patterns" value="Expressed in granulocyte and 88 other cell types or tissues"/>
</dbReference>
<dbReference type="GO" id="GO:0005929">
    <property type="term" value="C:cilium"/>
    <property type="evidence" value="ECO:0007669"/>
    <property type="project" value="Ensembl"/>
</dbReference>
<dbReference type="GO" id="GO:0016020">
    <property type="term" value="C:membrane"/>
    <property type="evidence" value="ECO:0000314"/>
    <property type="project" value="UniProtKB"/>
</dbReference>
<dbReference type="GO" id="GO:0005886">
    <property type="term" value="C:plasma membrane"/>
    <property type="evidence" value="ECO:0000318"/>
    <property type="project" value="GO_Central"/>
</dbReference>
<dbReference type="GO" id="GO:0004930">
    <property type="term" value="F:G protein-coupled receptor activity"/>
    <property type="evidence" value="ECO:0000304"/>
    <property type="project" value="UniProtKB"/>
</dbReference>
<dbReference type="GO" id="GO:0042924">
    <property type="term" value="F:neuromedin U binding"/>
    <property type="evidence" value="ECO:0000314"/>
    <property type="project" value="UniProtKB"/>
</dbReference>
<dbReference type="GO" id="GO:0001607">
    <property type="term" value="F:neuromedin U receptor activity"/>
    <property type="evidence" value="ECO:0000314"/>
    <property type="project" value="UniProtKB"/>
</dbReference>
<dbReference type="GO" id="GO:0008188">
    <property type="term" value="F:neuropeptide receptor activity"/>
    <property type="evidence" value="ECO:0000318"/>
    <property type="project" value="GO_Central"/>
</dbReference>
<dbReference type="GO" id="GO:0019722">
    <property type="term" value="P:calcium-mediated signaling"/>
    <property type="evidence" value="ECO:0000314"/>
    <property type="project" value="UniProtKB"/>
</dbReference>
<dbReference type="GO" id="GO:0006821">
    <property type="term" value="P:chloride transport"/>
    <property type="evidence" value="ECO:0000314"/>
    <property type="project" value="UniProtKB"/>
</dbReference>
<dbReference type="GO" id="GO:0007186">
    <property type="term" value="P:G protein-coupled receptor signaling pathway"/>
    <property type="evidence" value="ECO:0000304"/>
    <property type="project" value="ProtInc"/>
</dbReference>
<dbReference type="GO" id="GO:0007218">
    <property type="term" value="P:neuropeptide signaling pathway"/>
    <property type="evidence" value="ECO:0000318"/>
    <property type="project" value="GO_Central"/>
</dbReference>
<dbReference type="GO" id="GO:0007200">
    <property type="term" value="P:phospholipase C-activating G protein-coupled receptor signaling pathway"/>
    <property type="evidence" value="ECO:0000314"/>
    <property type="project" value="UniProtKB"/>
</dbReference>
<dbReference type="GO" id="GO:0050850">
    <property type="term" value="P:positive regulation of calcium-mediated signaling"/>
    <property type="evidence" value="ECO:0000314"/>
    <property type="project" value="UniProtKB"/>
</dbReference>
<dbReference type="GO" id="GO:0006939">
    <property type="term" value="P:smooth muscle contraction"/>
    <property type="evidence" value="ECO:0000270"/>
    <property type="project" value="UniProtKB"/>
</dbReference>
<dbReference type="CDD" id="cd15358">
    <property type="entry name" value="7tmA_NMU-R1"/>
    <property type="match status" value="1"/>
</dbReference>
<dbReference type="FunFam" id="1.20.1070.10:FF:000214">
    <property type="entry name" value="Neuromedin U receptor 1"/>
    <property type="match status" value="1"/>
</dbReference>
<dbReference type="Gene3D" id="1.20.1070.10">
    <property type="entry name" value="Rhodopsin 7-helix transmembrane proteins"/>
    <property type="match status" value="1"/>
</dbReference>
<dbReference type="InterPro" id="IPR000276">
    <property type="entry name" value="GPCR_Rhodpsn"/>
</dbReference>
<dbReference type="InterPro" id="IPR017452">
    <property type="entry name" value="GPCR_Rhodpsn_7TM"/>
</dbReference>
<dbReference type="InterPro" id="IPR005390">
    <property type="entry name" value="NeuromedU_rcpt"/>
</dbReference>
<dbReference type="InterPro" id="IPR005391">
    <property type="entry name" value="NeuromedU_rcpt_1"/>
</dbReference>
<dbReference type="PANTHER" id="PTHR24243">
    <property type="entry name" value="G-PROTEIN COUPLED RECEPTOR"/>
    <property type="match status" value="1"/>
</dbReference>
<dbReference type="PANTHER" id="PTHR24243:SF109">
    <property type="entry name" value="NEUROMEDIN-U RECEPTOR 1"/>
    <property type="match status" value="1"/>
</dbReference>
<dbReference type="Pfam" id="PF00001">
    <property type="entry name" value="7tm_1"/>
    <property type="match status" value="1"/>
</dbReference>
<dbReference type="PRINTS" id="PR00237">
    <property type="entry name" value="GPCRRHODOPSN"/>
</dbReference>
<dbReference type="PRINTS" id="PR01565">
    <property type="entry name" value="NEUROMEDINUR"/>
</dbReference>
<dbReference type="PRINTS" id="PR01566">
    <property type="entry name" value="NEUROMEDNU1R"/>
</dbReference>
<dbReference type="SMART" id="SM01381">
    <property type="entry name" value="7TM_GPCR_Srsx"/>
    <property type="match status" value="1"/>
</dbReference>
<dbReference type="SUPFAM" id="SSF81321">
    <property type="entry name" value="Family A G protein-coupled receptor-like"/>
    <property type="match status" value="1"/>
</dbReference>
<dbReference type="PROSITE" id="PS00237">
    <property type="entry name" value="G_PROTEIN_RECEP_F1_1"/>
    <property type="match status" value="1"/>
</dbReference>
<dbReference type="PROSITE" id="PS50262">
    <property type="entry name" value="G_PROTEIN_RECEP_F1_2"/>
    <property type="match status" value="1"/>
</dbReference>
<proteinExistence type="evidence at protein level"/>
<keyword id="KW-0002">3D-structure</keyword>
<keyword id="KW-1003">Cell membrane</keyword>
<keyword id="KW-1015">Disulfide bond</keyword>
<keyword id="KW-0297">G-protein coupled receptor</keyword>
<keyword id="KW-0325">Glycoprotein</keyword>
<keyword id="KW-0472">Membrane</keyword>
<keyword id="KW-0675">Receptor</keyword>
<keyword id="KW-1185">Reference proteome</keyword>
<keyword id="KW-0807">Transducer</keyword>
<keyword id="KW-0812">Transmembrane</keyword>
<keyword id="KW-1133">Transmembrane helix</keyword>
<evidence type="ECO:0000250" key="1"/>
<evidence type="ECO:0000255" key="2"/>
<evidence type="ECO:0000255" key="3">
    <source>
        <dbReference type="PROSITE-ProRule" id="PRU00521"/>
    </source>
</evidence>
<evidence type="ECO:0000269" key="4">
    <source>
    </source>
</evidence>
<evidence type="ECO:0000269" key="5">
    <source>
    </source>
</evidence>
<evidence type="ECO:0000305" key="6"/>
<evidence type="ECO:0007829" key="7">
    <source>
        <dbReference type="PDB" id="7W53"/>
    </source>
</evidence>
<evidence type="ECO:0007829" key="8">
    <source>
        <dbReference type="PDB" id="7W56"/>
    </source>
</evidence>
<accession>Q9HB89</accession>
<accession>O43664</accession>
<accession>Q7LDP6</accession>
<accession>Q8NE20</accession>
<organism>
    <name type="scientific">Homo sapiens</name>
    <name type="common">Human</name>
    <dbReference type="NCBI Taxonomy" id="9606"/>
    <lineage>
        <taxon>Eukaryota</taxon>
        <taxon>Metazoa</taxon>
        <taxon>Chordata</taxon>
        <taxon>Craniata</taxon>
        <taxon>Vertebrata</taxon>
        <taxon>Euteleostomi</taxon>
        <taxon>Mammalia</taxon>
        <taxon>Eutheria</taxon>
        <taxon>Euarchontoglires</taxon>
        <taxon>Primates</taxon>
        <taxon>Haplorrhini</taxon>
        <taxon>Catarrhini</taxon>
        <taxon>Hominidae</taxon>
        <taxon>Homo</taxon>
    </lineage>
</organism>
<feature type="chain" id="PRO_0000069906" description="Neuromedin-U receptor 1">
    <location>
        <begin position="1"/>
        <end position="426"/>
    </location>
</feature>
<feature type="topological domain" description="Extracellular" evidence="2">
    <location>
        <begin position="1"/>
        <end position="65"/>
    </location>
</feature>
<feature type="transmembrane region" description="Helical; Name=1" evidence="2">
    <location>
        <begin position="66"/>
        <end position="86"/>
    </location>
</feature>
<feature type="topological domain" description="Cytoplasmic" evidence="2">
    <location>
        <begin position="87"/>
        <end position="97"/>
    </location>
</feature>
<feature type="transmembrane region" description="Helical; Name=2" evidence="2">
    <location>
        <begin position="98"/>
        <end position="118"/>
    </location>
</feature>
<feature type="topological domain" description="Extracellular" evidence="2">
    <location>
        <begin position="119"/>
        <end position="138"/>
    </location>
</feature>
<feature type="transmembrane region" description="Helical; Name=3" evidence="2">
    <location>
        <begin position="139"/>
        <end position="161"/>
    </location>
</feature>
<feature type="topological domain" description="Cytoplasmic" evidence="2">
    <location>
        <begin position="162"/>
        <end position="181"/>
    </location>
</feature>
<feature type="transmembrane region" description="Helical; Name=4" evidence="2">
    <location>
        <begin position="182"/>
        <end position="202"/>
    </location>
</feature>
<feature type="topological domain" description="Extracellular" evidence="2">
    <location>
        <begin position="203"/>
        <end position="235"/>
    </location>
</feature>
<feature type="transmembrane region" description="Helical; Name=5" evidence="2">
    <location>
        <begin position="236"/>
        <end position="256"/>
    </location>
</feature>
<feature type="topological domain" description="Cytoplasmic" evidence="2">
    <location>
        <begin position="257"/>
        <end position="294"/>
    </location>
</feature>
<feature type="transmembrane region" description="Helical; Name=6" evidence="2">
    <location>
        <begin position="295"/>
        <end position="315"/>
    </location>
</feature>
<feature type="topological domain" description="Extracellular" evidence="2">
    <location>
        <begin position="316"/>
        <end position="338"/>
    </location>
</feature>
<feature type="transmembrane region" description="Helical; Name=7" evidence="2">
    <location>
        <begin position="339"/>
        <end position="359"/>
    </location>
</feature>
<feature type="topological domain" description="Cytoplasmic" evidence="2">
    <location>
        <begin position="360"/>
        <end position="426"/>
    </location>
</feature>
<feature type="glycosylation site" description="N-linked (GlcNAc...) asparagine" evidence="2">
    <location>
        <position position="7"/>
    </location>
</feature>
<feature type="glycosylation site" description="N-linked (GlcNAc...) asparagine" evidence="2">
    <location>
        <position position="27"/>
    </location>
</feature>
<feature type="glycosylation site" description="N-linked (GlcNAc...) asparagine" evidence="2">
    <location>
        <position position="41"/>
    </location>
</feature>
<feature type="disulfide bond" evidence="3">
    <location>
        <begin position="134"/>
        <end position="219"/>
    </location>
</feature>
<feature type="sequence conflict" description="In Ref. 3; AAH36543." evidence="6" ref="3">
    <original>R</original>
    <variation>Q</variation>
    <location>
        <position position="203"/>
    </location>
</feature>
<feature type="helix" evidence="8">
    <location>
        <begin position="61"/>
        <end position="87"/>
    </location>
</feature>
<feature type="helix" evidence="8">
    <location>
        <begin position="89"/>
        <end position="91"/>
    </location>
</feature>
<feature type="helix" evidence="8">
    <location>
        <begin position="94"/>
        <end position="122"/>
    </location>
</feature>
<feature type="helix" evidence="8">
    <location>
        <begin position="130"/>
        <end position="159"/>
    </location>
</feature>
<feature type="helix" evidence="8">
    <location>
        <begin position="160"/>
        <end position="162"/>
    </location>
</feature>
<feature type="helix" evidence="8">
    <location>
        <begin position="167"/>
        <end position="171"/>
    </location>
</feature>
<feature type="helix" evidence="8">
    <location>
        <begin position="175"/>
        <end position="197"/>
    </location>
</feature>
<feature type="strand" evidence="7">
    <location>
        <begin position="200"/>
        <end position="202"/>
    </location>
</feature>
<feature type="strand" evidence="7">
    <location>
        <begin position="219"/>
        <end position="223"/>
    </location>
</feature>
<feature type="helix" evidence="8">
    <location>
        <begin position="225"/>
        <end position="239"/>
    </location>
</feature>
<feature type="helix" evidence="8">
    <location>
        <begin position="241"/>
        <end position="259"/>
    </location>
</feature>
<feature type="helix" evidence="8">
    <location>
        <begin position="293"/>
        <end position="322"/>
    </location>
</feature>
<feature type="helix" evidence="8">
    <location>
        <begin position="331"/>
        <end position="356"/>
    </location>
</feature>
<feature type="turn" evidence="8">
    <location>
        <begin position="357"/>
        <end position="359"/>
    </location>
</feature>
<feature type="helix" evidence="8">
    <location>
        <begin position="361"/>
        <end position="364"/>
    </location>
</feature>
<gene>
    <name type="primary">NMUR1</name>
    <name type="synonym">GPR66</name>
</gene>
<reference key="1">
    <citation type="journal article" date="2000" name="J. Biol. Chem.">
        <title>Identification and characterization of two neuromedin U receptors differentially expressed in peripheral tissues and the central nervous system.</title>
        <authorList>
            <person name="Raddatz R."/>
            <person name="Wilson A.E."/>
            <person name="Artymyshyn R."/>
            <person name="Bonini J.A."/>
            <person name="Borowsky B."/>
            <person name="Boteju L.W."/>
            <person name="Zhou S."/>
            <person name="Kouranova E.V."/>
            <person name="Nagorny R."/>
            <person name="Guevarra M.S."/>
            <person name="Dai M."/>
            <person name="Lerman G.S."/>
            <person name="Vaysse P.J."/>
            <person name="Branchek T.A."/>
            <person name="Gerald C."/>
            <person name="Forray C."/>
            <person name="Adham N."/>
        </authorList>
    </citation>
    <scope>NUCLEOTIDE SEQUENCE [MRNA]</scope>
    <scope>FUNCTION</scope>
    <scope>TISSUE SPECIFICITY</scope>
</reference>
<reference key="2">
    <citation type="journal article" date="2005" name="Nature">
        <title>Generation and annotation of the DNA sequences of human chromosomes 2 and 4.</title>
        <authorList>
            <person name="Hillier L.W."/>
            <person name="Graves T.A."/>
            <person name="Fulton R.S."/>
            <person name="Fulton L.A."/>
            <person name="Pepin K.H."/>
            <person name="Minx P."/>
            <person name="Wagner-McPherson C."/>
            <person name="Layman D."/>
            <person name="Wylie K."/>
            <person name="Sekhon M."/>
            <person name="Becker M.C."/>
            <person name="Fewell G.A."/>
            <person name="Delehaunty K.D."/>
            <person name="Miner T.L."/>
            <person name="Nash W.E."/>
            <person name="Kremitzki C."/>
            <person name="Oddy L."/>
            <person name="Du H."/>
            <person name="Sun H."/>
            <person name="Bradshaw-Cordum H."/>
            <person name="Ali J."/>
            <person name="Carter J."/>
            <person name="Cordes M."/>
            <person name="Harris A."/>
            <person name="Isak A."/>
            <person name="van Brunt A."/>
            <person name="Nguyen C."/>
            <person name="Du F."/>
            <person name="Courtney L."/>
            <person name="Kalicki J."/>
            <person name="Ozersky P."/>
            <person name="Abbott S."/>
            <person name="Armstrong J."/>
            <person name="Belter E.A."/>
            <person name="Caruso L."/>
            <person name="Cedroni M."/>
            <person name="Cotton M."/>
            <person name="Davidson T."/>
            <person name="Desai A."/>
            <person name="Elliott G."/>
            <person name="Erb T."/>
            <person name="Fronick C."/>
            <person name="Gaige T."/>
            <person name="Haakenson W."/>
            <person name="Haglund K."/>
            <person name="Holmes A."/>
            <person name="Harkins R."/>
            <person name="Kim K."/>
            <person name="Kruchowski S.S."/>
            <person name="Strong C.M."/>
            <person name="Grewal N."/>
            <person name="Goyea E."/>
            <person name="Hou S."/>
            <person name="Levy A."/>
            <person name="Martinka S."/>
            <person name="Mead K."/>
            <person name="McLellan M.D."/>
            <person name="Meyer R."/>
            <person name="Randall-Maher J."/>
            <person name="Tomlinson C."/>
            <person name="Dauphin-Kohlberg S."/>
            <person name="Kozlowicz-Reilly A."/>
            <person name="Shah N."/>
            <person name="Swearengen-Shahid S."/>
            <person name="Snider J."/>
            <person name="Strong J.T."/>
            <person name="Thompson J."/>
            <person name="Yoakum M."/>
            <person name="Leonard S."/>
            <person name="Pearman C."/>
            <person name="Trani L."/>
            <person name="Radionenko M."/>
            <person name="Waligorski J.E."/>
            <person name="Wang C."/>
            <person name="Rock S.M."/>
            <person name="Tin-Wollam A.-M."/>
            <person name="Maupin R."/>
            <person name="Latreille P."/>
            <person name="Wendl M.C."/>
            <person name="Yang S.-P."/>
            <person name="Pohl C."/>
            <person name="Wallis J.W."/>
            <person name="Spieth J."/>
            <person name="Bieri T.A."/>
            <person name="Berkowicz N."/>
            <person name="Nelson J.O."/>
            <person name="Osborne J."/>
            <person name="Ding L."/>
            <person name="Meyer R."/>
            <person name="Sabo A."/>
            <person name="Shotland Y."/>
            <person name="Sinha P."/>
            <person name="Wohldmann P.E."/>
            <person name="Cook L.L."/>
            <person name="Hickenbotham M.T."/>
            <person name="Eldred J."/>
            <person name="Williams D."/>
            <person name="Jones T.A."/>
            <person name="She X."/>
            <person name="Ciccarelli F.D."/>
            <person name="Izaurralde E."/>
            <person name="Taylor J."/>
            <person name="Schmutz J."/>
            <person name="Myers R.M."/>
            <person name="Cox D.R."/>
            <person name="Huang X."/>
            <person name="McPherson J.D."/>
            <person name="Mardis E.R."/>
            <person name="Clifton S.W."/>
            <person name="Warren W.C."/>
            <person name="Chinwalla A.T."/>
            <person name="Eddy S.R."/>
            <person name="Marra M.A."/>
            <person name="Ovcharenko I."/>
            <person name="Furey T.S."/>
            <person name="Miller W."/>
            <person name="Eichler E.E."/>
            <person name="Bork P."/>
            <person name="Suyama M."/>
            <person name="Torrents D."/>
            <person name="Waterston R.H."/>
            <person name="Wilson R.K."/>
        </authorList>
    </citation>
    <scope>NUCLEOTIDE SEQUENCE [LARGE SCALE GENOMIC DNA]</scope>
</reference>
<reference key="3">
    <citation type="journal article" date="2004" name="Genome Res.">
        <title>The status, quality, and expansion of the NIH full-length cDNA project: the Mammalian Gene Collection (MGC).</title>
        <authorList>
            <consortium name="The MGC Project Team"/>
        </authorList>
    </citation>
    <scope>NUCLEOTIDE SEQUENCE [LARGE SCALE MRNA]</scope>
    <source>
        <tissue>PNS</tissue>
        <tissue>Testis</tissue>
    </source>
</reference>
<reference key="4">
    <citation type="journal article" date="1998" name="Genomics">
        <title>Cloning and characterization of a human and murine T-cell orphan G-protein-coupled receptor similar to the growth hormone secretagogue and neurotensin receptors.</title>
        <authorList>
            <person name="Tan C.P."/>
            <person name="McKee K.K."/>
            <person name="Liu Q."/>
            <person name="Palyha O.C."/>
            <person name="Feighner S.D."/>
            <person name="Hreniuk D.L."/>
            <person name="Smith R.G."/>
            <person name="Howard A.D."/>
        </authorList>
    </citation>
    <scope>NUCLEOTIDE SEQUENCE [GENOMIC DNA] OF 24-426</scope>
    <scope>TISSUE SPECIFICITY</scope>
</reference>
<sequence length="426" mass="47351">MTPLCLNCSVLPGDLYPGGARNPMACNGSAARGHFDPEDLNLTDEALRLKYLGPQQTELFMPICATYLLIFVVGAVGNGLTCLVILRHKAMRTPTNYYLFSLAVSDLLVLLVGLPLELYEMWHNYPFLLGVGGCYFRTLLFEMVCLASVLNVTALSVERYVAVVHPLQARSMVTRAHVRRVLGAVWGLAMLCSLPNTSLHGIRQLHVPCRGPVPDSAVCMLVRPRALYNMVVQTTALLFFCLPMAIMSVLYLLIGLRLRRERLLLMQEAKGRGSAAARSRYTCRLQQHDRGRRQVTKMLFVLVVVFGICWAPFHADRVMWSVVSQWTDGLHLAFQHVHVISGIFFYLGSAANPVLYSLMSSRFRETFQEALCLGACCHRLRPRHSSHSLSRMTTGSTLCDVGSLGSWVHPLAGNDGPEAQQETDPS</sequence>
<protein>
    <recommendedName>
        <fullName>Neuromedin-U receptor 1</fullName>
        <shortName>NMU-R1</shortName>
    </recommendedName>
    <alternativeName>
        <fullName>G-protein coupled receptor 66</fullName>
    </alternativeName>
    <alternativeName>
        <fullName>G-protein coupled receptor FM-3</fullName>
    </alternativeName>
</protein>
<comment type="function">
    <text evidence="1 4">Receptor for the neuromedin-U and neuromedin-S neuropeptides.</text>
</comment>
<comment type="subcellular location">
    <subcellularLocation>
        <location>Cell membrane</location>
        <topology>Multi-pass membrane protein</topology>
    </subcellularLocation>
</comment>
<comment type="tissue specificity">
    <text evidence="4 5">Expressed in greatest abundance in peripheral organs, particularly in elements of the gastrointestinal and urogenital systems with highest levels in testes. In central nervous system structures express levels are much lower than those seen in peripheral organs. Within the CNS, has been detected in highest abundance in the cerebellum, dorsal root ganglia, hippocampus, and spinal cord.</text>
</comment>
<comment type="similarity">
    <text evidence="3">Belongs to the G-protein coupled receptor 1 family.</text>
</comment>
<comment type="caution">
    <text evidence="6">It is uncertain whether Met-1 or Met-24 is the initiator.</text>
</comment>